<dbReference type="EMBL" id="AM236080">
    <property type="protein sequence ID" value="CAK05609.1"/>
    <property type="molecule type" value="Genomic_DNA"/>
</dbReference>
<dbReference type="RefSeq" id="WP_003544317.1">
    <property type="nucleotide sequence ID" value="NC_008380.1"/>
</dbReference>
<dbReference type="SMR" id="Q1MN43"/>
<dbReference type="EnsemblBacteria" id="CAK05609">
    <property type="protein sequence ID" value="CAK05609"/>
    <property type="gene ID" value="RL0121"/>
</dbReference>
<dbReference type="GeneID" id="84667673"/>
<dbReference type="KEGG" id="rle:RL0121"/>
<dbReference type="eggNOG" id="COG0184">
    <property type="taxonomic scope" value="Bacteria"/>
</dbReference>
<dbReference type="HOGENOM" id="CLU_148518_0_0_5"/>
<dbReference type="Proteomes" id="UP000006575">
    <property type="component" value="Chromosome"/>
</dbReference>
<dbReference type="GO" id="GO:0022627">
    <property type="term" value="C:cytosolic small ribosomal subunit"/>
    <property type="evidence" value="ECO:0007669"/>
    <property type="project" value="TreeGrafter"/>
</dbReference>
<dbReference type="GO" id="GO:0019843">
    <property type="term" value="F:rRNA binding"/>
    <property type="evidence" value="ECO:0007669"/>
    <property type="project" value="UniProtKB-UniRule"/>
</dbReference>
<dbReference type="GO" id="GO:0003735">
    <property type="term" value="F:structural constituent of ribosome"/>
    <property type="evidence" value="ECO:0007669"/>
    <property type="project" value="InterPro"/>
</dbReference>
<dbReference type="GO" id="GO:0006412">
    <property type="term" value="P:translation"/>
    <property type="evidence" value="ECO:0007669"/>
    <property type="project" value="UniProtKB-UniRule"/>
</dbReference>
<dbReference type="CDD" id="cd00353">
    <property type="entry name" value="Ribosomal_S15p_S13e"/>
    <property type="match status" value="1"/>
</dbReference>
<dbReference type="FunFam" id="1.10.287.10:FF:000002">
    <property type="entry name" value="30S ribosomal protein S15"/>
    <property type="match status" value="1"/>
</dbReference>
<dbReference type="Gene3D" id="6.10.250.3130">
    <property type="match status" value="1"/>
</dbReference>
<dbReference type="Gene3D" id="1.10.287.10">
    <property type="entry name" value="S15/NS1, RNA-binding"/>
    <property type="match status" value="1"/>
</dbReference>
<dbReference type="HAMAP" id="MF_01343_B">
    <property type="entry name" value="Ribosomal_uS15_B"/>
    <property type="match status" value="1"/>
</dbReference>
<dbReference type="InterPro" id="IPR000589">
    <property type="entry name" value="Ribosomal_uS15"/>
</dbReference>
<dbReference type="InterPro" id="IPR005290">
    <property type="entry name" value="Ribosomal_uS15_bac-type"/>
</dbReference>
<dbReference type="InterPro" id="IPR009068">
    <property type="entry name" value="uS15_NS1_RNA-bd_sf"/>
</dbReference>
<dbReference type="NCBIfam" id="TIGR00952">
    <property type="entry name" value="S15_bact"/>
    <property type="match status" value="1"/>
</dbReference>
<dbReference type="PANTHER" id="PTHR23321">
    <property type="entry name" value="RIBOSOMAL PROTEIN S15, BACTERIAL AND ORGANELLAR"/>
    <property type="match status" value="1"/>
</dbReference>
<dbReference type="PANTHER" id="PTHR23321:SF26">
    <property type="entry name" value="SMALL RIBOSOMAL SUBUNIT PROTEIN US15M"/>
    <property type="match status" value="1"/>
</dbReference>
<dbReference type="Pfam" id="PF00312">
    <property type="entry name" value="Ribosomal_S15"/>
    <property type="match status" value="1"/>
</dbReference>
<dbReference type="SMART" id="SM01387">
    <property type="entry name" value="Ribosomal_S15"/>
    <property type="match status" value="1"/>
</dbReference>
<dbReference type="SUPFAM" id="SSF47060">
    <property type="entry name" value="S15/NS1 RNA-binding domain"/>
    <property type="match status" value="1"/>
</dbReference>
<dbReference type="PROSITE" id="PS00362">
    <property type="entry name" value="RIBOSOMAL_S15"/>
    <property type="match status" value="1"/>
</dbReference>
<comment type="function">
    <text evidence="1">One of the primary rRNA binding proteins, it binds directly to 16S rRNA where it helps nucleate assembly of the platform of the 30S subunit by binding and bridging several RNA helices of the 16S rRNA.</text>
</comment>
<comment type="function">
    <text evidence="1">Forms an intersubunit bridge (bridge B4) with the 23S rRNA of the 50S subunit in the ribosome.</text>
</comment>
<comment type="subunit">
    <text evidence="1">Part of the 30S ribosomal subunit. Forms a bridge to the 50S subunit in the 70S ribosome, contacting the 23S rRNA.</text>
</comment>
<comment type="similarity">
    <text evidence="1">Belongs to the universal ribosomal protein uS15 family.</text>
</comment>
<reference key="1">
    <citation type="journal article" date="2006" name="Genome Biol.">
        <title>The genome of Rhizobium leguminosarum has recognizable core and accessory components.</title>
        <authorList>
            <person name="Young J.P.W."/>
            <person name="Crossman L.C."/>
            <person name="Johnston A.W.B."/>
            <person name="Thomson N.R."/>
            <person name="Ghazoui Z.F."/>
            <person name="Hull K.H."/>
            <person name="Wexler M."/>
            <person name="Curson A.R.J."/>
            <person name="Todd J.D."/>
            <person name="Poole P.S."/>
            <person name="Mauchline T.H."/>
            <person name="East A.K."/>
            <person name="Quail M.A."/>
            <person name="Churcher C."/>
            <person name="Arrowsmith C."/>
            <person name="Cherevach I."/>
            <person name="Chillingworth T."/>
            <person name="Clarke K."/>
            <person name="Cronin A."/>
            <person name="Davis P."/>
            <person name="Fraser A."/>
            <person name="Hance Z."/>
            <person name="Hauser H."/>
            <person name="Jagels K."/>
            <person name="Moule S."/>
            <person name="Mungall K."/>
            <person name="Norbertczak H."/>
            <person name="Rabbinowitsch E."/>
            <person name="Sanders M."/>
            <person name="Simmonds M."/>
            <person name="Whitehead S."/>
            <person name="Parkhill J."/>
        </authorList>
    </citation>
    <scope>NUCLEOTIDE SEQUENCE [LARGE SCALE GENOMIC DNA]</scope>
    <source>
        <strain>DSM 114642 / LMG 32736 / 3841</strain>
    </source>
</reference>
<organism>
    <name type="scientific">Rhizobium johnstonii (strain DSM 114642 / LMG 32736 / 3841)</name>
    <name type="common">Rhizobium leguminosarum bv. viciae</name>
    <dbReference type="NCBI Taxonomy" id="216596"/>
    <lineage>
        <taxon>Bacteria</taxon>
        <taxon>Pseudomonadati</taxon>
        <taxon>Pseudomonadota</taxon>
        <taxon>Alphaproteobacteria</taxon>
        <taxon>Hyphomicrobiales</taxon>
        <taxon>Rhizobiaceae</taxon>
        <taxon>Rhizobium/Agrobacterium group</taxon>
        <taxon>Rhizobium</taxon>
        <taxon>Rhizobium johnstonii</taxon>
    </lineage>
</organism>
<feature type="chain" id="PRO_0000255519" description="Small ribosomal subunit protein uS15">
    <location>
        <begin position="1"/>
        <end position="89"/>
    </location>
</feature>
<accession>Q1MN43</accession>
<proteinExistence type="inferred from homology"/>
<name>RS15_RHIJ3</name>
<gene>
    <name evidence="1" type="primary">rpsO</name>
    <name type="ordered locus">RL0121</name>
</gene>
<sequence>MSITAERKSALIKEYATVEGDTGSPEVQVAILTERINNLTEHFKDHKKDNHSRRGLLTMVSSRRSLLDYLKKKDEGRYSKLITSLGIRR</sequence>
<protein>
    <recommendedName>
        <fullName evidence="1">Small ribosomal subunit protein uS15</fullName>
    </recommendedName>
    <alternativeName>
        <fullName evidence="2">30S ribosomal protein S15</fullName>
    </alternativeName>
</protein>
<keyword id="KW-0687">Ribonucleoprotein</keyword>
<keyword id="KW-0689">Ribosomal protein</keyword>
<keyword id="KW-0694">RNA-binding</keyword>
<keyword id="KW-0699">rRNA-binding</keyword>
<evidence type="ECO:0000255" key="1">
    <source>
        <dbReference type="HAMAP-Rule" id="MF_01343"/>
    </source>
</evidence>
<evidence type="ECO:0000305" key="2"/>